<name>ZN646_HUMAN</name>
<gene>
    <name evidence="8" type="primary">ZNF646</name>
    <name evidence="6" type="synonym">KIAA0296</name>
</gene>
<accession>O15015</accession>
<accession>Q8IVD8</accession>
<comment type="function">
    <text>May be involved in transcriptional regulation.</text>
</comment>
<comment type="interaction">
    <interactant intactId="EBI-745608">
        <id>O15015</id>
    </interactant>
    <interactant intactId="EBI-6598631">
        <id>Q7Z589</id>
        <label>EMSY</label>
    </interactant>
    <organismsDiffer>false</organismsDiffer>
    <experiments>3</experiments>
</comment>
<comment type="interaction">
    <interactant intactId="EBI-745608">
        <id>O15015</id>
    </interactant>
    <interactant intactId="EBI-17490413">
        <id>A8MZ59</id>
        <label>LEUTX</label>
    </interactant>
    <organismsDiffer>false</organismsDiffer>
    <experiments>3</experiments>
</comment>
<comment type="interaction">
    <interactant intactId="EBI-745608">
        <id>O15015</id>
    </interactant>
    <interactant intactId="EBI-724076">
        <id>Q99750</id>
        <label>MDFI</label>
    </interactant>
    <organismsDiffer>false</organismsDiffer>
    <experiments>3</experiments>
</comment>
<comment type="interaction">
    <interactant intactId="EBI-745608">
        <id>O15015</id>
    </interactant>
    <interactant intactId="EBI-3952014">
        <id>Q13976</id>
        <label>PRKG1</label>
    </interactant>
    <organismsDiffer>false</organismsDiffer>
    <experiments>4</experiments>
</comment>
<comment type="subcellular location">
    <subcellularLocation>
        <location evidence="7">Nucleus</location>
    </subcellularLocation>
</comment>
<comment type="alternative products">
    <event type="alternative splicing"/>
    <isoform>
        <id>O15015-2</id>
        <name>2</name>
        <sequence type="displayed"/>
    </isoform>
    <isoform>
        <id>O15015-1</id>
        <name>1</name>
        <sequence type="described" ref="VSP_060189"/>
    </isoform>
</comment>
<comment type="similarity">
    <text evidence="7">Belongs to the krueppel C2H2-type zinc-finger protein family.</text>
</comment>
<comment type="sequence caution" evidence="7">
    <conflict type="erroneous initiation">
        <sequence resource="EMBL-CDS" id="BAA20756"/>
    </conflict>
    <text>Extended N-terminus.</text>
</comment>
<proteinExistence type="evidence at protein level"/>
<keyword id="KW-0025">Alternative splicing</keyword>
<keyword id="KW-0238">DNA-binding</keyword>
<keyword id="KW-1017">Isopeptide bond</keyword>
<keyword id="KW-0479">Metal-binding</keyword>
<keyword id="KW-0539">Nucleus</keyword>
<keyword id="KW-0597">Phosphoprotein</keyword>
<keyword id="KW-1267">Proteomics identification</keyword>
<keyword id="KW-1185">Reference proteome</keyword>
<keyword id="KW-0677">Repeat</keyword>
<keyword id="KW-0804">Transcription</keyword>
<keyword id="KW-0805">Transcription regulation</keyword>
<keyword id="KW-0832">Ubl conjugation</keyword>
<keyword id="KW-0862">Zinc</keyword>
<keyword id="KW-0863">Zinc-finger</keyword>
<organism>
    <name type="scientific">Homo sapiens</name>
    <name type="common">Human</name>
    <dbReference type="NCBI Taxonomy" id="9606"/>
    <lineage>
        <taxon>Eukaryota</taxon>
        <taxon>Metazoa</taxon>
        <taxon>Chordata</taxon>
        <taxon>Craniata</taxon>
        <taxon>Vertebrata</taxon>
        <taxon>Euteleostomi</taxon>
        <taxon>Mammalia</taxon>
        <taxon>Eutheria</taxon>
        <taxon>Euarchontoglires</taxon>
        <taxon>Primates</taxon>
        <taxon>Haplorrhini</taxon>
        <taxon>Catarrhini</taxon>
        <taxon>Hominidae</taxon>
        <taxon>Homo</taxon>
    </lineage>
</organism>
<reference key="1">
    <citation type="journal article" date="1997" name="DNA Res.">
        <title>Prediction of the coding sequences of unidentified human genes. VII. The complete sequences of 100 new cDNA clones from brain which can code for large proteins in vitro.</title>
        <authorList>
            <person name="Nagase T."/>
            <person name="Ishikawa K."/>
            <person name="Nakajima D."/>
            <person name="Ohira M."/>
            <person name="Seki N."/>
            <person name="Miyajima N."/>
            <person name="Tanaka A."/>
            <person name="Kotani H."/>
            <person name="Nomura N."/>
            <person name="Ohara O."/>
        </authorList>
    </citation>
    <scope>NUCLEOTIDE SEQUENCE [LARGE SCALE MRNA] (ISOFORM 1)</scope>
    <source>
        <tissue>Brain</tissue>
    </source>
</reference>
<reference key="2">
    <citation type="journal article" date="2004" name="Nature">
        <title>The sequence and analysis of duplication-rich human chromosome 16.</title>
        <authorList>
            <person name="Martin J."/>
            <person name="Han C."/>
            <person name="Gordon L.A."/>
            <person name="Terry A."/>
            <person name="Prabhakar S."/>
            <person name="She X."/>
            <person name="Xie G."/>
            <person name="Hellsten U."/>
            <person name="Chan Y.M."/>
            <person name="Altherr M."/>
            <person name="Couronne O."/>
            <person name="Aerts A."/>
            <person name="Bajorek E."/>
            <person name="Black S."/>
            <person name="Blumer H."/>
            <person name="Branscomb E."/>
            <person name="Brown N.C."/>
            <person name="Bruno W.J."/>
            <person name="Buckingham J.M."/>
            <person name="Callen D.F."/>
            <person name="Campbell C.S."/>
            <person name="Campbell M.L."/>
            <person name="Campbell E.W."/>
            <person name="Caoile C."/>
            <person name="Challacombe J.F."/>
            <person name="Chasteen L.A."/>
            <person name="Chertkov O."/>
            <person name="Chi H.C."/>
            <person name="Christensen M."/>
            <person name="Clark L.M."/>
            <person name="Cohn J.D."/>
            <person name="Denys M."/>
            <person name="Detter J.C."/>
            <person name="Dickson M."/>
            <person name="Dimitrijevic-Bussod M."/>
            <person name="Escobar J."/>
            <person name="Fawcett J.J."/>
            <person name="Flowers D."/>
            <person name="Fotopulos D."/>
            <person name="Glavina T."/>
            <person name="Gomez M."/>
            <person name="Gonzales E."/>
            <person name="Goodstein D."/>
            <person name="Goodwin L.A."/>
            <person name="Grady D.L."/>
            <person name="Grigoriev I."/>
            <person name="Groza M."/>
            <person name="Hammon N."/>
            <person name="Hawkins T."/>
            <person name="Haydu L."/>
            <person name="Hildebrand C.E."/>
            <person name="Huang W."/>
            <person name="Israni S."/>
            <person name="Jett J."/>
            <person name="Jewett P.B."/>
            <person name="Kadner K."/>
            <person name="Kimball H."/>
            <person name="Kobayashi A."/>
            <person name="Krawczyk M.-C."/>
            <person name="Leyba T."/>
            <person name="Longmire J.L."/>
            <person name="Lopez F."/>
            <person name="Lou Y."/>
            <person name="Lowry S."/>
            <person name="Ludeman T."/>
            <person name="Manohar C.F."/>
            <person name="Mark G.A."/>
            <person name="McMurray K.L."/>
            <person name="Meincke L.J."/>
            <person name="Morgan J."/>
            <person name="Moyzis R.K."/>
            <person name="Mundt M.O."/>
            <person name="Munk A.C."/>
            <person name="Nandkeshwar R.D."/>
            <person name="Pitluck S."/>
            <person name="Pollard M."/>
            <person name="Predki P."/>
            <person name="Parson-Quintana B."/>
            <person name="Ramirez L."/>
            <person name="Rash S."/>
            <person name="Retterer J."/>
            <person name="Ricke D.O."/>
            <person name="Robinson D.L."/>
            <person name="Rodriguez A."/>
            <person name="Salamov A."/>
            <person name="Saunders E.H."/>
            <person name="Scott D."/>
            <person name="Shough T."/>
            <person name="Stallings R.L."/>
            <person name="Stalvey M."/>
            <person name="Sutherland R.D."/>
            <person name="Tapia R."/>
            <person name="Tesmer J.G."/>
            <person name="Thayer N."/>
            <person name="Thompson L.S."/>
            <person name="Tice H."/>
            <person name="Torney D.C."/>
            <person name="Tran-Gyamfi M."/>
            <person name="Tsai M."/>
            <person name="Ulanovsky L.E."/>
            <person name="Ustaszewska A."/>
            <person name="Vo N."/>
            <person name="White P.S."/>
            <person name="Williams A.L."/>
            <person name="Wills P.L."/>
            <person name="Wu J.-R."/>
            <person name="Wu K."/>
            <person name="Yang J."/>
            <person name="DeJong P."/>
            <person name="Bruce D."/>
            <person name="Doggett N.A."/>
            <person name="Deaven L."/>
            <person name="Schmutz J."/>
            <person name="Grimwood J."/>
            <person name="Richardson P."/>
            <person name="Rokhsar D.S."/>
            <person name="Eichler E.E."/>
            <person name="Gilna P."/>
            <person name="Lucas S.M."/>
            <person name="Myers R.M."/>
            <person name="Rubin E.M."/>
            <person name="Pennacchio L.A."/>
        </authorList>
    </citation>
    <scope>NUCLEOTIDE SEQUENCE [LARGE SCALE GENOMIC DNA]</scope>
</reference>
<reference key="3">
    <citation type="submission" date="2005-07" db="EMBL/GenBank/DDBJ databases">
        <authorList>
            <person name="Mural R.J."/>
            <person name="Istrail S."/>
            <person name="Sutton G."/>
            <person name="Florea L."/>
            <person name="Halpern A.L."/>
            <person name="Mobarry C.M."/>
            <person name="Lippert R."/>
            <person name="Walenz B."/>
            <person name="Shatkay H."/>
            <person name="Dew I."/>
            <person name="Miller J.R."/>
            <person name="Flanigan M.J."/>
            <person name="Edwards N.J."/>
            <person name="Bolanos R."/>
            <person name="Fasulo D."/>
            <person name="Halldorsson B.V."/>
            <person name="Hannenhalli S."/>
            <person name="Turner R."/>
            <person name="Yooseph S."/>
            <person name="Lu F."/>
            <person name="Nusskern D.R."/>
            <person name="Shue B.C."/>
            <person name="Zheng X.H."/>
            <person name="Zhong F."/>
            <person name="Delcher A.L."/>
            <person name="Huson D.H."/>
            <person name="Kravitz S.A."/>
            <person name="Mouchard L."/>
            <person name="Reinert K."/>
            <person name="Remington K.A."/>
            <person name="Clark A.G."/>
            <person name="Waterman M.S."/>
            <person name="Eichler E.E."/>
            <person name="Adams M.D."/>
            <person name="Hunkapiller M.W."/>
            <person name="Myers E.W."/>
            <person name="Venter J.C."/>
        </authorList>
    </citation>
    <scope>NUCLEOTIDE SEQUENCE [LARGE SCALE GENOMIC DNA]</scope>
    <scope>VARIANT GLY-327</scope>
</reference>
<reference key="4">
    <citation type="journal article" date="2004" name="Genome Res.">
        <title>The status, quality, and expansion of the NIH full-length cDNA project: the Mammalian Gene Collection (MGC).</title>
        <authorList>
            <consortium name="The MGC Project Team"/>
        </authorList>
    </citation>
    <scope>NUCLEOTIDE SEQUENCE [LARGE SCALE MRNA] (ISOFORM 2)</scope>
    <scope>VARIANT GLY-327</scope>
    <source>
        <tissue>Uterus</tissue>
    </source>
</reference>
<reference key="5">
    <citation type="journal article" date="2006" name="Cell">
        <title>Global, in vivo, and site-specific phosphorylation dynamics in signaling networks.</title>
        <authorList>
            <person name="Olsen J.V."/>
            <person name="Blagoev B."/>
            <person name="Gnad F."/>
            <person name="Macek B."/>
            <person name="Kumar C."/>
            <person name="Mortensen P."/>
            <person name="Mann M."/>
        </authorList>
    </citation>
    <scope>IDENTIFICATION BY MASS SPECTROMETRY [LARGE SCALE ANALYSIS]</scope>
    <source>
        <tissue>Cervix carcinoma</tissue>
    </source>
</reference>
<reference key="6">
    <citation type="journal article" date="2013" name="J. Proteome Res.">
        <title>Toward a comprehensive characterization of a human cancer cell phosphoproteome.</title>
        <authorList>
            <person name="Zhou H."/>
            <person name="Di Palma S."/>
            <person name="Preisinger C."/>
            <person name="Peng M."/>
            <person name="Polat A.N."/>
            <person name="Heck A.J."/>
            <person name="Mohammed S."/>
        </authorList>
    </citation>
    <scope>PHOSPHORYLATION [LARGE SCALE ANALYSIS] AT SER-612</scope>
    <scope>IDENTIFICATION BY MASS SPECTROMETRY [LARGE SCALE ANALYSIS]</scope>
    <source>
        <tissue>Cervix carcinoma</tissue>
    </source>
</reference>
<reference key="7">
    <citation type="journal article" date="2014" name="Nat. Struct. Mol. Biol.">
        <title>Uncovering global SUMOylation signaling networks in a site-specific manner.</title>
        <authorList>
            <person name="Hendriks I.A."/>
            <person name="D'Souza R.C."/>
            <person name="Yang B."/>
            <person name="Verlaan-de Vries M."/>
            <person name="Mann M."/>
            <person name="Vertegaal A.C."/>
        </authorList>
    </citation>
    <scope>SUMOYLATION [LARGE SCALE ANALYSIS] AT LYS-1157; LYS-1168 AND LYS-1178</scope>
    <scope>IDENTIFICATION BY MASS SPECTROMETRY [LARGE SCALE ANALYSIS]</scope>
</reference>
<reference key="8">
    <citation type="journal article" date="2015" name="Cell Rep.">
        <title>SUMO-2 orchestrates chromatin modifiers in response to DNA damage.</title>
        <authorList>
            <person name="Hendriks I.A."/>
            <person name="Treffers L.W."/>
            <person name="Verlaan-de Vries M."/>
            <person name="Olsen J.V."/>
            <person name="Vertegaal A.C."/>
        </authorList>
    </citation>
    <scope>SUMOYLATION [LARGE SCALE ANALYSIS] AT LYS-1157 AND LYS-1168</scope>
    <scope>IDENTIFICATION BY MASS SPECTROMETRY [LARGE SCALE ANALYSIS]</scope>
</reference>
<reference key="9">
    <citation type="journal article" date="2015" name="Mol. Cell. Proteomics">
        <title>System-wide analysis of SUMOylation dynamics in response to replication stress reveals novel small ubiquitin-like modified target proteins and acceptor lysines relevant for genome stability.</title>
        <authorList>
            <person name="Xiao Z."/>
            <person name="Chang J.G."/>
            <person name="Hendriks I.A."/>
            <person name="Sigurdsson J.O."/>
            <person name="Olsen J.V."/>
            <person name="Vertegaal A.C."/>
        </authorList>
    </citation>
    <scope>SUMOYLATION [LARGE SCALE ANALYSIS] AT LYS-1157 AND LYS-1168</scope>
    <scope>IDENTIFICATION BY MASS SPECTROMETRY [LARGE SCALE ANALYSIS]</scope>
</reference>
<reference key="10">
    <citation type="journal article" date="2017" name="Nat. Struct. Mol. Biol.">
        <title>Site-specific mapping of the human SUMO proteome reveals co-modification with phosphorylation.</title>
        <authorList>
            <person name="Hendriks I.A."/>
            <person name="Lyon D."/>
            <person name="Young C."/>
            <person name="Jensen L.J."/>
            <person name="Vertegaal A.C."/>
            <person name="Nielsen M.L."/>
        </authorList>
    </citation>
    <scope>SUMOYLATION [LARGE SCALE ANALYSIS] AT LYS-451; LYS-534; LYS-557; LYS-688; LYS-1157; LYS-1168 AND LYS-1178</scope>
    <scope>IDENTIFICATION BY MASS SPECTROMETRY [LARGE SCALE ANALYSIS]</scope>
</reference>
<reference key="11">
    <citation type="journal article" date="2006" name="Science">
        <title>The consensus coding sequences of human breast and colorectal cancers.</title>
        <authorList>
            <person name="Sjoeblom T."/>
            <person name="Jones S."/>
            <person name="Wood L.D."/>
            <person name="Parsons D.W."/>
            <person name="Lin J."/>
            <person name="Barber T.D."/>
            <person name="Mandelker D."/>
            <person name="Leary R.J."/>
            <person name="Ptak J."/>
            <person name="Silliman N."/>
            <person name="Szabo S."/>
            <person name="Buckhaults P."/>
            <person name="Farrell C."/>
            <person name="Meeh P."/>
            <person name="Markowitz S.D."/>
            <person name="Willis J."/>
            <person name="Dawson D."/>
            <person name="Willson J.K.V."/>
            <person name="Gazdar A.F."/>
            <person name="Hartigan J."/>
            <person name="Wu L."/>
            <person name="Liu C."/>
            <person name="Parmigiani G."/>
            <person name="Park B.H."/>
            <person name="Bachman K.E."/>
            <person name="Papadopoulos N."/>
            <person name="Vogelstein B."/>
            <person name="Kinzler K.W."/>
            <person name="Velculescu V.E."/>
        </authorList>
    </citation>
    <scope>VARIANT [LARGE SCALE ANALYSIS] ILE-1337</scope>
</reference>
<dbReference type="EMBL" id="AB002294">
    <property type="protein sequence ID" value="BAA20756.2"/>
    <property type="status" value="ALT_INIT"/>
    <property type="molecule type" value="mRNA"/>
</dbReference>
<dbReference type="EMBL" id="AC135050">
    <property type="status" value="NOT_ANNOTATED_CDS"/>
    <property type="molecule type" value="Genomic_DNA"/>
</dbReference>
<dbReference type="EMBL" id="CH471192">
    <property type="protein sequence ID" value="EAW52170.1"/>
    <property type="molecule type" value="Genomic_DNA"/>
</dbReference>
<dbReference type="EMBL" id="BC035589">
    <property type="protein sequence ID" value="AAH35589.1"/>
    <property type="molecule type" value="mRNA"/>
</dbReference>
<dbReference type="CCDS" id="CCDS10702.1">
    <molecule id="O15015-2"/>
</dbReference>
<dbReference type="RefSeq" id="NP_055514.3">
    <molecule id="O15015-2"/>
    <property type="nucleotide sequence ID" value="NM_014699.3"/>
</dbReference>
<dbReference type="RefSeq" id="XP_005255767.1">
    <molecule id="O15015-2"/>
    <property type="nucleotide sequence ID" value="XM_005255710.5"/>
</dbReference>
<dbReference type="RefSeq" id="XP_005255768.1">
    <molecule id="O15015-2"/>
    <property type="nucleotide sequence ID" value="XM_005255711.5"/>
</dbReference>
<dbReference type="RefSeq" id="XP_011544292.1">
    <molecule id="O15015-2"/>
    <property type="nucleotide sequence ID" value="XM_011545990.3"/>
</dbReference>
<dbReference type="RefSeq" id="XP_047290912.1">
    <molecule id="O15015-2"/>
    <property type="nucleotide sequence ID" value="XM_047434956.1"/>
</dbReference>
<dbReference type="RefSeq" id="XP_054170463.1">
    <molecule id="O15015-2"/>
    <property type="nucleotide sequence ID" value="XM_054314488.1"/>
</dbReference>
<dbReference type="RefSeq" id="XP_054170464.1">
    <molecule id="O15015-2"/>
    <property type="nucleotide sequence ID" value="XM_054314489.1"/>
</dbReference>
<dbReference type="RefSeq" id="XP_054170465.1">
    <molecule id="O15015-2"/>
    <property type="nucleotide sequence ID" value="XM_054314490.1"/>
</dbReference>
<dbReference type="BioGRID" id="115075">
    <property type="interactions" value="42"/>
</dbReference>
<dbReference type="FunCoup" id="O15015">
    <property type="interactions" value="1346"/>
</dbReference>
<dbReference type="IntAct" id="O15015">
    <property type="interactions" value="35"/>
</dbReference>
<dbReference type="STRING" id="9606.ENSP00000300850"/>
<dbReference type="GlyGen" id="O15015">
    <property type="glycosylation" value="4 sites, 1 O-linked glycan (2 sites)"/>
</dbReference>
<dbReference type="iPTMnet" id="O15015"/>
<dbReference type="PhosphoSitePlus" id="O15015"/>
<dbReference type="SwissPalm" id="O15015"/>
<dbReference type="BioMuta" id="ZNF646"/>
<dbReference type="jPOST" id="O15015"/>
<dbReference type="MassIVE" id="O15015"/>
<dbReference type="PaxDb" id="9606-ENSP00000300850"/>
<dbReference type="PeptideAtlas" id="O15015"/>
<dbReference type="ProteomicsDB" id="48370">
    <molecule id="O15015-1"/>
</dbReference>
<dbReference type="ProteomicsDB" id="48371">
    <molecule id="O15015-2"/>
</dbReference>
<dbReference type="Pumba" id="O15015"/>
<dbReference type="Antibodypedia" id="27569">
    <property type="antibodies" value="26 antibodies from 11 providers"/>
</dbReference>
<dbReference type="DNASU" id="9726"/>
<dbReference type="Ensembl" id="ENST00000300850.5">
    <molecule id="O15015-2"/>
    <property type="protein sequence ID" value="ENSP00000300850.5"/>
    <property type="gene ID" value="ENSG00000167395.10"/>
</dbReference>
<dbReference type="Ensembl" id="ENST00000394979.2">
    <molecule id="O15015-1"/>
    <property type="protein sequence ID" value="ENSP00000378429.2"/>
    <property type="gene ID" value="ENSG00000167395.10"/>
</dbReference>
<dbReference type="GeneID" id="9726"/>
<dbReference type="KEGG" id="hsa:9726"/>
<dbReference type="MANE-Select" id="ENST00000300850.5">
    <property type="protein sequence ID" value="ENSP00000300850.5"/>
    <property type="RefSeq nucleotide sequence ID" value="NM_014699.4"/>
    <property type="RefSeq protein sequence ID" value="NP_055514.3"/>
</dbReference>
<dbReference type="UCSC" id="uc002eap.4">
    <molecule id="O15015-2"/>
    <property type="organism name" value="human"/>
</dbReference>
<dbReference type="AGR" id="HGNC:29004"/>
<dbReference type="CTD" id="9726"/>
<dbReference type="DisGeNET" id="9726"/>
<dbReference type="GeneCards" id="ZNF646"/>
<dbReference type="HGNC" id="HGNC:29004">
    <property type="gene designation" value="ZNF646"/>
</dbReference>
<dbReference type="HPA" id="ENSG00000167395">
    <property type="expression patterns" value="Tissue enhanced (testis)"/>
</dbReference>
<dbReference type="MIM" id="619299">
    <property type="type" value="gene"/>
</dbReference>
<dbReference type="neXtProt" id="NX_O15015"/>
<dbReference type="OpenTargets" id="ENSG00000167395"/>
<dbReference type="PharmGKB" id="PA134955953"/>
<dbReference type="VEuPathDB" id="HostDB:ENSG00000167395"/>
<dbReference type="eggNOG" id="KOG1721">
    <property type="taxonomic scope" value="Eukaryota"/>
</dbReference>
<dbReference type="GeneTree" id="ENSGT00940000161588"/>
<dbReference type="HOGENOM" id="CLU_002678_44_18_1"/>
<dbReference type="InParanoid" id="O15015"/>
<dbReference type="OMA" id="MECHQER"/>
<dbReference type="OrthoDB" id="8117402at2759"/>
<dbReference type="PAN-GO" id="O15015">
    <property type="GO annotations" value="3 GO annotations based on evolutionary models"/>
</dbReference>
<dbReference type="PhylomeDB" id="O15015"/>
<dbReference type="TreeFam" id="TF350868"/>
<dbReference type="PathwayCommons" id="O15015"/>
<dbReference type="SignaLink" id="O15015"/>
<dbReference type="BioGRID-ORCS" id="9726">
    <property type="hits" value="13 hits in 1188 CRISPR screens"/>
</dbReference>
<dbReference type="ChiTaRS" id="ZNF646">
    <property type="organism name" value="human"/>
</dbReference>
<dbReference type="GenomeRNAi" id="9726"/>
<dbReference type="Pharos" id="O15015">
    <property type="development level" value="Tdark"/>
</dbReference>
<dbReference type="PRO" id="PR:O15015"/>
<dbReference type="Proteomes" id="UP000005640">
    <property type="component" value="Chromosome 16"/>
</dbReference>
<dbReference type="RNAct" id="O15015">
    <property type="molecule type" value="protein"/>
</dbReference>
<dbReference type="Bgee" id="ENSG00000167395">
    <property type="expression patterns" value="Expressed in right testis and 130 other cell types or tissues"/>
</dbReference>
<dbReference type="ExpressionAtlas" id="O15015">
    <property type="expression patterns" value="baseline and differential"/>
</dbReference>
<dbReference type="GO" id="GO:0005634">
    <property type="term" value="C:nucleus"/>
    <property type="evidence" value="ECO:0007669"/>
    <property type="project" value="UniProtKB-SubCell"/>
</dbReference>
<dbReference type="GO" id="GO:0000981">
    <property type="term" value="F:DNA-binding transcription factor activity, RNA polymerase II-specific"/>
    <property type="evidence" value="ECO:0000318"/>
    <property type="project" value="GO_Central"/>
</dbReference>
<dbReference type="GO" id="GO:0000978">
    <property type="term" value="F:RNA polymerase II cis-regulatory region sequence-specific DNA binding"/>
    <property type="evidence" value="ECO:0000318"/>
    <property type="project" value="GO_Central"/>
</dbReference>
<dbReference type="GO" id="GO:0008270">
    <property type="term" value="F:zinc ion binding"/>
    <property type="evidence" value="ECO:0007669"/>
    <property type="project" value="UniProtKB-KW"/>
</dbReference>
<dbReference type="GO" id="GO:0006355">
    <property type="term" value="P:regulation of DNA-templated transcription"/>
    <property type="evidence" value="ECO:0000318"/>
    <property type="project" value="GO_Central"/>
</dbReference>
<dbReference type="FunFam" id="3.30.160.60:FF:000100">
    <property type="entry name" value="Zinc finger 45-like"/>
    <property type="match status" value="1"/>
</dbReference>
<dbReference type="FunFam" id="3.30.160.60:FF:000729">
    <property type="entry name" value="Zinc finger protein 646"/>
    <property type="match status" value="3"/>
</dbReference>
<dbReference type="FunFam" id="3.30.160.60:FF:001421">
    <property type="entry name" value="Zinc finger protein 646"/>
    <property type="match status" value="1"/>
</dbReference>
<dbReference type="FunFam" id="3.30.160.60:FF:001645">
    <property type="entry name" value="Zinc finger protein 646"/>
    <property type="match status" value="1"/>
</dbReference>
<dbReference type="FunFam" id="3.30.160.60:FF:001838">
    <property type="entry name" value="Zinc finger protein 646"/>
    <property type="match status" value="1"/>
</dbReference>
<dbReference type="FunFam" id="3.30.160.60:FF:002082">
    <property type="entry name" value="Zinc finger protein 646"/>
    <property type="match status" value="1"/>
</dbReference>
<dbReference type="FunFam" id="3.30.160.60:FF:002439">
    <property type="entry name" value="Zinc finger protein 646"/>
    <property type="match status" value="1"/>
</dbReference>
<dbReference type="FunFam" id="3.30.160.60:FF:002632">
    <property type="entry name" value="Zinc finger protein 646"/>
    <property type="match status" value="1"/>
</dbReference>
<dbReference type="FunFam" id="3.30.160.60:FF:001144">
    <property type="entry name" value="zinc finger protein 646"/>
    <property type="match status" value="2"/>
</dbReference>
<dbReference type="FunFam" id="3.30.160.60:FF:001345">
    <property type="entry name" value="zinc finger protein 646"/>
    <property type="match status" value="1"/>
</dbReference>
<dbReference type="FunFam" id="3.30.160.60:FF:001575">
    <property type="entry name" value="zinc finger protein 646"/>
    <property type="match status" value="1"/>
</dbReference>
<dbReference type="Gene3D" id="3.30.160.60">
    <property type="entry name" value="Classic Zinc Finger"/>
    <property type="match status" value="16"/>
</dbReference>
<dbReference type="InterPro" id="IPR036236">
    <property type="entry name" value="Znf_C2H2_sf"/>
</dbReference>
<dbReference type="InterPro" id="IPR013087">
    <property type="entry name" value="Znf_C2H2_type"/>
</dbReference>
<dbReference type="PANTHER" id="PTHR24376">
    <property type="entry name" value="ZINC FINGER PROTEIN"/>
    <property type="match status" value="1"/>
</dbReference>
<dbReference type="PANTHER" id="PTHR24376:SF100">
    <property type="entry name" value="ZINC FINGER PROTEIN 646"/>
    <property type="match status" value="1"/>
</dbReference>
<dbReference type="Pfam" id="PF00096">
    <property type="entry name" value="zf-C2H2"/>
    <property type="match status" value="16"/>
</dbReference>
<dbReference type="Pfam" id="PF13912">
    <property type="entry name" value="zf-C2H2_6"/>
    <property type="match status" value="2"/>
</dbReference>
<dbReference type="SMART" id="SM00355">
    <property type="entry name" value="ZnF_C2H2"/>
    <property type="match status" value="32"/>
</dbReference>
<dbReference type="SUPFAM" id="SSF57667">
    <property type="entry name" value="beta-beta-alpha zinc fingers"/>
    <property type="match status" value="16"/>
</dbReference>
<dbReference type="PROSITE" id="PS00028">
    <property type="entry name" value="ZINC_FINGER_C2H2_1"/>
    <property type="match status" value="30"/>
</dbReference>
<dbReference type="PROSITE" id="PS50157">
    <property type="entry name" value="ZINC_FINGER_C2H2_2"/>
    <property type="match status" value="29"/>
</dbReference>
<protein>
    <recommendedName>
        <fullName evidence="7">Zinc finger protein 646</fullName>
    </recommendedName>
</protein>
<evidence type="ECO:0000255" key="1">
    <source>
        <dbReference type="PROSITE-ProRule" id="PRU00042"/>
    </source>
</evidence>
<evidence type="ECO:0000256" key="2">
    <source>
        <dbReference type="SAM" id="MobiDB-lite"/>
    </source>
</evidence>
<evidence type="ECO:0000269" key="3">
    <source>
    </source>
</evidence>
<evidence type="ECO:0000269" key="4">
    <source>
    </source>
</evidence>
<evidence type="ECO:0000269" key="5">
    <source ref="3"/>
</evidence>
<evidence type="ECO:0000303" key="6">
    <source>
    </source>
</evidence>
<evidence type="ECO:0000305" key="7"/>
<evidence type="ECO:0000312" key="8">
    <source>
        <dbReference type="HGNC" id="HGNC:29004"/>
    </source>
</evidence>
<evidence type="ECO:0007744" key="9">
    <source>
    </source>
</evidence>
<evidence type="ECO:0007744" key="10">
    <source>
    </source>
</evidence>
<evidence type="ECO:0007744" key="11">
    <source>
    </source>
</evidence>
<evidence type="ECO:0007744" key="12">
    <source>
    </source>
</evidence>
<evidence type="ECO:0007744" key="13">
    <source>
    </source>
</evidence>
<sequence>MEDTPPSLSCSDCQRHFPSLPELSRHRELLHPSPNQDSEEADSIPRPYRCQQCGRGYRHPGSLVNHRRTHETGLFPCTTCGKDFSNPMALKSHMRTHAPEGRRRHRPPRPKEATPHLQGETVSTDSWGQRLGSSEGWENQTKHTEETPDCESVPDPRAASGTWEDLPTRQREGLASHPGPEDGADGWGPSTNSARAPPLPIPASSLLSNLEQYLAESVVNFTGGQEPTQSPPAEEERRYKCSQCGKTYKHAGSLTNHRQSHTLGIYPCAICFKEFSNLMALKNHSRLHAQYRPYHCPHCPRVFRLPRELLEHQQSHEGERQEPRWEEKGMPTTNGHTDESSQDQLPSAQMLNGSAELSTSGELEDSGLEEYRPFRCGDCGRTYRHAGSLINHRKSHQTGVYPCSLCSKQLFNAAALKNHVRAHHRPRQGVGENGQPSVPPAPLLLAETTHKEEEDPTTTLDHRPYKCSECGRAYRHRGSLVNHRHSHRTGEYQCSLCPRKYPNLMALRNHVRVHCKAARRSADIGAEGAPSHLKVELPPDPVEAEAAPHTDQDHVCKHEEEATDITPAADKTAAHICSICGLLFEDAESLERHGLTHGAGEKENSRTETTMSPPRAFACRDCGKSYRHSGSLINHRQTHQTGDFSCGACAKHFHTMAAMKNHLRRHSRRRSRRHRKRAGGASGGREAKLLAAESWTRELEDNEGLESPQDPSGESPHGAEGNLESDGDCLQAESEGDKCGLERDETHFQGDKESGGTGEGLERKDASLLDNLDIPGEEGGGTHFCDSLTGVDEDQKPATGQPNSSSHSANAVTGWQAGAAHTCSDCGHSFPHATGLLSHRPCHPPGIYQCSLCPKEFDSLPALRSHFQNHRPGEATSAQPFLCCLCGMIFPGRAGYRLHRRQAHSSSGMTEGSEEEGEEEGVAEAAPARSPPLQLSEAELLNQLQREVEALDSAGYGHICGCCGQTYDDLGSLERHHQSQSSGTTADKAPSPLGVAGDAMEMVVDSVLEDIVNSVSGEGGDAKSQEGAGTPLGDSLCIQGGESLLEAQPRPFRCNQCGKTYRHGGSLVNHRKIHQTGDFLCPVCSRCYPNLAAYRNHLRNHPRCKGSEPQVGPIPEAAGSSELQVGPIPEGGSNKPQHMAEEGPGQAEVEKLQEELKVEPLEEVARVKEEVWEETTVKGEEIEPRLETAEKGCQTEASSERPFSCEVCGRSYKHAGSLINHRQSHQTGHFGCQACSKGFSNLMSLKNHRRIHADPRRFRCSECGKAFRLRKQLASHQRVHMERRGGGGTRKATREDRPFRCGQCGRTYRHAGSLLNHRRSHETGQYSCPTCPKTYSNRMALKDHQRLHSENRRRRAGRSRRTAVRCALCGRSFPGRGSLERHLREHEETEREPANGQGGLDGTAASEANLTGSQGLETQLGGAEPVPHLEDGVPRPGERSQSPIRAASSEAPEPLSWGAGKAGGWPVGGGLGNHSGGWVPQFLTRSEEPEDSVHRSPCHAGDCQLNGPTLSHMDSWDNRDNSSQLQPGSHSSCSQCGKTYCQSGSLLNHNTNKTDRHYCLLCSKEFLNPVATKSHSHNHIDAQTFACPDCGKAFESHQELASHLQAHARGHSQVPAQMEEARDPKAGTGEDQVVLPGQGKAQEAPSETPRGPGESVERARGGQAVTSMAAEDKERPFRCTQCGRSYRHAGSLLNHQKAHTTGLYPCSLCPKLLPNLLSLKNHSRTHTDPKRHCCSICGKAFRTAARLEGHGRVHAPREGPFTCPHCPRHFRRRISFVQHQQQHQEEWTVAGSGAPVAPVTGRGDLPLPPPPTPTTPLLDPSPQWPADLSFSL</sequence>
<feature type="chain" id="PRO_0000047699" description="Zinc finger protein 646">
    <location>
        <begin position="1"/>
        <end position="1832"/>
    </location>
</feature>
<feature type="zinc finger region" description="C2H2-type 1" evidence="1">
    <location>
        <begin position="8"/>
        <end position="31"/>
    </location>
</feature>
<feature type="zinc finger region" description="C2H2-type 2" evidence="1">
    <location>
        <begin position="48"/>
        <end position="70"/>
    </location>
</feature>
<feature type="zinc finger region" description="C2H2-type 3" evidence="1">
    <location>
        <begin position="75"/>
        <end position="97"/>
    </location>
</feature>
<feature type="zinc finger region" description="C2H2-type 4" evidence="1">
    <location>
        <begin position="239"/>
        <end position="261"/>
    </location>
</feature>
<feature type="zinc finger region" description="C2H2-type 5" evidence="1">
    <location>
        <begin position="266"/>
        <end position="288"/>
    </location>
</feature>
<feature type="zinc finger region" description="C2H2-type 6" evidence="1">
    <location>
        <begin position="294"/>
        <end position="316"/>
    </location>
</feature>
<feature type="zinc finger region" description="C2H2-type 7" evidence="1">
    <location>
        <begin position="374"/>
        <end position="396"/>
    </location>
</feature>
<feature type="zinc finger region" description="C2H2-type 8" evidence="1">
    <location>
        <begin position="401"/>
        <end position="424"/>
    </location>
</feature>
<feature type="zinc finger region" description="C2H2-type 9" evidence="1">
    <location>
        <begin position="465"/>
        <end position="487"/>
    </location>
</feature>
<feature type="zinc finger region" description="C2H2-type 10" evidence="1">
    <location>
        <begin position="492"/>
        <end position="514"/>
    </location>
</feature>
<feature type="zinc finger region" description="C2H2-type 11" evidence="1">
    <location>
        <begin position="575"/>
        <end position="597"/>
    </location>
</feature>
<feature type="zinc finger region" description="C2H2-type 12" evidence="1">
    <location>
        <begin position="617"/>
        <end position="639"/>
    </location>
</feature>
<feature type="zinc finger region" description="C2H2-type 13" evidence="1">
    <location>
        <begin position="644"/>
        <end position="666"/>
    </location>
</feature>
<feature type="zinc finger region" description="C2H2-type 14" evidence="1">
    <location>
        <begin position="821"/>
        <end position="843"/>
    </location>
</feature>
<feature type="zinc finger region" description="C2H2-type 15" evidence="1">
    <location>
        <begin position="848"/>
        <end position="870"/>
    </location>
</feature>
<feature type="zinc finger region" description="C2H2-type 16" evidence="1">
    <location>
        <begin position="881"/>
        <end position="904"/>
    </location>
</feature>
<feature type="zinc finger region" description="C2H2-type 17; degenerate" evidence="1">
    <location>
        <begin position="958"/>
        <end position="980"/>
    </location>
</feature>
<feature type="zinc finger region" description="C2H2-type 18" evidence="1">
    <location>
        <begin position="1052"/>
        <end position="1074"/>
    </location>
</feature>
<feature type="zinc finger region" description="C2H2-type 19" evidence="1">
    <location>
        <begin position="1079"/>
        <end position="1101"/>
    </location>
</feature>
<feature type="zinc finger region" description="C2H2-type 20" evidence="1">
    <location>
        <begin position="1203"/>
        <end position="1225"/>
    </location>
</feature>
<feature type="zinc finger region" description="C2H2-type 21" evidence="1">
    <location>
        <begin position="1230"/>
        <end position="1252"/>
    </location>
</feature>
<feature type="zinc finger region" description="C2H2-type 22" evidence="1">
    <location>
        <begin position="1258"/>
        <end position="1280"/>
    </location>
</feature>
<feature type="zinc finger region" description="C2H2-type 23" evidence="1">
    <location>
        <begin position="1299"/>
        <end position="1321"/>
    </location>
</feature>
<feature type="zinc finger region" description="C2H2-type 24" evidence="1">
    <location>
        <begin position="1326"/>
        <end position="1348"/>
    </location>
</feature>
<feature type="zinc finger region" description="C2H2-type 25" evidence="1">
    <location>
        <begin position="1364"/>
        <end position="1386"/>
    </location>
</feature>
<feature type="zinc finger region" description="C2H2-type 26" evidence="1">
    <location>
        <begin position="1557"/>
        <end position="1579"/>
    </location>
</feature>
<feature type="zinc finger region" description="C2H2-type 27" evidence="1">
    <location>
        <begin position="1585"/>
        <end position="1607"/>
    </location>
</feature>
<feature type="zinc finger region" description="C2H2-type 28" evidence="1">
    <location>
        <begin position="1677"/>
        <end position="1699"/>
    </location>
</feature>
<feature type="zinc finger region" description="C2H2-type 29" evidence="1">
    <location>
        <begin position="1704"/>
        <end position="1726"/>
    </location>
</feature>
<feature type="zinc finger region" description="C2H2-type 30" evidence="1">
    <location>
        <begin position="1732"/>
        <end position="1754"/>
    </location>
</feature>
<feature type="zinc finger region" description="C2H2-type 31" evidence="1">
    <location>
        <begin position="1761"/>
        <end position="1783"/>
    </location>
</feature>
<feature type="region of interest" description="Disordered" evidence="2">
    <location>
        <begin position="26"/>
        <end position="47"/>
    </location>
</feature>
<feature type="region of interest" description="Disordered" evidence="2">
    <location>
        <begin position="94"/>
        <end position="200"/>
    </location>
</feature>
<feature type="region of interest" description="Disordered" evidence="2">
    <location>
        <begin position="313"/>
        <end position="346"/>
    </location>
</feature>
<feature type="region of interest" description="Disordered" evidence="2">
    <location>
        <begin position="660"/>
        <end position="810"/>
    </location>
</feature>
<feature type="region of interest" description="Disordered" evidence="2">
    <location>
        <begin position="901"/>
        <end position="931"/>
    </location>
</feature>
<feature type="region of interest" description="Disordered" evidence="2">
    <location>
        <begin position="1103"/>
        <end position="1148"/>
    </location>
</feature>
<feature type="region of interest" description="Disordered" evidence="2">
    <location>
        <begin position="1274"/>
        <end position="1294"/>
    </location>
</feature>
<feature type="region of interest" description="Disordered" evidence="2">
    <location>
        <begin position="1377"/>
        <end position="1481"/>
    </location>
</feature>
<feature type="region of interest" description="Disordered" evidence="2">
    <location>
        <begin position="1509"/>
        <end position="1529"/>
    </location>
</feature>
<feature type="region of interest" description="Disordered" evidence="2">
    <location>
        <begin position="1606"/>
        <end position="1672"/>
    </location>
</feature>
<feature type="region of interest" description="Disordered" evidence="2">
    <location>
        <begin position="1781"/>
        <end position="1832"/>
    </location>
</feature>
<feature type="compositionally biased region" description="Basic residues" evidence="2">
    <location>
        <begin position="94"/>
        <end position="108"/>
    </location>
</feature>
<feature type="compositionally biased region" description="Basic and acidic residues" evidence="2">
    <location>
        <begin position="313"/>
        <end position="329"/>
    </location>
</feature>
<feature type="compositionally biased region" description="Basic residues" evidence="2">
    <location>
        <begin position="661"/>
        <end position="678"/>
    </location>
</feature>
<feature type="compositionally biased region" description="Basic and acidic residues" evidence="2">
    <location>
        <begin position="735"/>
        <end position="767"/>
    </location>
</feature>
<feature type="compositionally biased region" description="Polar residues" evidence="2">
    <location>
        <begin position="798"/>
        <end position="810"/>
    </location>
</feature>
<feature type="compositionally biased region" description="Acidic residues" evidence="2">
    <location>
        <begin position="912"/>
        <end position="922"/>
    </location>
</feature>
<feature type="compositionally biased region" description="Basic and acidic residues" evidence="2">
    <location>
        <begin position="1378"/>
        <end position="1393"/>
    </location>
</feature>
<feature type="compositionally biased region" description="Polar residues" evidence="2">
    <location>
        <begin position="1406"/>
        <end position="1417"/>
    </location>
</feature>
<feature type="compositionally biased region" description="Basic and acidic residues" evidence="2">
    <location>
        <begin position="1427"/>
        <end position="1438"/>
    </location>
</feature>
<feature type="compositionally biased region" description="Gly residues" evidence="2">
    <location>
        <begin position="1460"/>
        <end position="1475"/>
    </location>
</feature>
<feature type="modified residue" description="Phosphoserine" evidence="9">
    <location>
        <position position="612"/>
    </location>
</feature>
<feature type="cross-link" description="Glycyl lysine isopeptide (Lys-Gly) (interchain with G-Cter in SUMO2)" evidence="13">
    <location>
        <position position="451"/>
    </location>
</feature>
<feature type="cross-link" description="Glycyl lysine isopeptide (Lys-Gly) (interchain with G-Cter in SUMO2)" evidence="13">
    <location>
        <position position="534"/>
    </location>
</feature>
<feature type="cross-link" description="Glycyl lysine isopeptide (Lys-Gly) (interchain with G-Cter in SUMO2)" evidence="13">
    <location>
        <position position="557"/>
    </location>
</feature>
<feature type="cross-link" description="Glycyl lysine isopeptide (Lys-Gly) (interchain with G-Cter in SUMO2)" evidence="13">
    <location>
        <position position="688"/>
    </location>
</feature>
<feature type="cross-link" description="Glycyl lysine isopeptide (Lys-Gly) (interchain with G-Cter in SUMO2)" evidence="10 11 12 13">
    <location>
        <position position="1157"/>
    </location>
</feature>
<feature type="cross-link" description="Glycyl lysine isopeptide (Lys-Gly) (interchain with G-Cter in SUMO2)" evidence="10 11 12 13">
    <location>
        <position position="1168"/>
    </location>
</feature>
<feature type="cross-link" description="Glycyl lysine isopeptide (Lys-Gly) (interchain with G-Cter in SUMO2)" evidence="10 13">
    <location>
        <position position="1178"/>
    </location>
</feature>
<feature type="splice variant" id="VSP_060189" description="In isoform 1.">
    <original>APVAPVTGRGDLPLPPPPTPTTPLLDPSPQWPADLSFSL</original>
    <variation>RGHEGSQEEVGTQWRGKSSPKVGGGARSERREPRGF</variation>
    <location>
        <begin position="1794"/>
        <end position="1832"/>
    </location>
</feature>
<feature type="sequence variant" id="VAR_057430" description="In dbSNP:rs28407985.">
    <original>A</original>
    <variation>V</variation>
    <location>
        <position position="98"/>
    </location>
</feature>
<feature type="sequence variant" id="VAR_057431" description="In dbSNP:rs749670." evidence="3 5">
    <original>E</original>
    <variation>G</variation>
    <location>
        <position position="327"/>
    </location>
</feature>
<feature type="sequence variant" id="VAR_057432" description="In dbSNP:rs17641067.">
    <original>I</original>
    <variation>M</variation>
    <location>
        <position position="774"/>
    </location>
</feature>
<feature type="sequence variant" id="VAR_057433" description="In dbSNP:rs35713203.">
    <original>G</original>
    <variation>A</variation>
    <location>
        <position position="921"/>
    </location>
</feature>
<feature type="sequence variant" id="VAR_057434" description="In dbSNP:rs35376811.">
    <original>R</original>
    <variation>W</variation>
    <location>
        <position position="1249"/>
    </location>
</feature>
<feature type="sequence variant" id="VAR_057435" description="In dbSNP:rs3751856.">
    <original>R</original>
    <variation>Q</variation>
    <location>
        <position position="1318"/>
    </location>
</feature>
<feature type="sequence variant" id="VAR_035594" description="In a breast cancer sample; somatic mutation." evidence="4">
    <original>N</original>
    <variation>I</variation>
    <location>
        <position position="1337"/>
    </location>
</feature>
<feature type="sequence variant" id="VAR_057436" description="In dbSNP:rs7196726.">
    <original>G</original>
    <variation>D</variation>
    <location>
        <position position="1477"/>
    </location>
</feature>
<feature type="sequence variant" id="VAR_057437" description="In dbSNP:rs34259949.">
    <original>T</original>
    <variation>M</variation>
    <location>
        <position position="1788"/>
    </location>
</feature>